<keyword id="KW-0687">Ribonucleoprotein</keyword>
<keyword id="KW-0689">Ribosomal protein</keyword>
<keyword id="KW-0694">RNA-binding</keyword>
<keyword id="KW-0699">rRNA-binding</keyword>
<dbReference type="EMBL" id="AP006841">
    <property type="protein sequence ID" value="BAD51201.1"/>
    <property type="molecule type" value="Genomic_DNA"/>
</dbReference>
<dbReference type="RefSeq" id="WP_005791955.1">
    <property type="nucleotide sequence ID" value="NZ_UYXF01000006.1"/>
</dbReference>
<dbReference type="RefSeq" id="YP_101735.1">
    <property type="nucleotide sequence ID" value="NC_006347.1"/>
</dbReference>
<dbReference type="SMR" id="Q64MT6"/>
<dbReference type="STRING" id="295405.BF4464"/>
<dbReference type="GeneID" id="60366684"/>
<dbReference type="KEGG" id="bfr:BF4464"/>
<dbReference type="PATRIC" id="fig|295405.11.peg.4302"/>
<dbReference type="HOGENOM" id="CLU_148518_0_1_10"/>
<dbReference type="OrthoDB" id="9799262at2"/>
<dbReference type="Proteomes" id="UP000002197">
    <property type="component" value="Chromosome"/>
</dbReference>
<dbReference type="GO" id="GO:0022627">
    <property type="term" value="C:cytosolic small ribosomal subunit"/>
    <property type="evidence" value="ECO:0007669"/>
    <property type="project" value="TreeGrafter"/>
</dbReference>
<dbReference type="GO" id="GO:0019843">
    <property type="term" value="F:rRNA binding"/>
    <property type="evidence" value="ECO:0007669"/>
    <property type="project" value="UniProtKB-UniRule"/>
</dbReference>
<dbReference type="GO" id="GO:0003735">
    <property type="term" value="F:structural constituent of ribosome"/>
    <property type="evidence" value="ECO:0007669"/>
    <property type="project" value="InterPro"/>
</dbReference>
<dbReference type="GO" id="GO:0006412">
    <property type="term" value="P:translation"/>
    <property type="evidence" value="ECO:0007669"/>
    <property type="project" value="UniProtKB-UniRule"/>
</dbReference>
<dbReference type="CDD" id="cd00353">
    <property type="entry name" value="Ribosomal_S15p_S13e"/>
    <property type="match status" value="1"/>
</dbReference>
<dbReference type="FunFam" id="1.10.287.10:FF:000002">
    <property type="entry name" value="30S ribosomal protein S15"/>
    <property type="match status" value="1"/>
</dbReference>
<dbReference type="Gene3D" id="6.10.250.3130">
    <property type="match status" value="1"/>
</dbReference>
<dbReference type="Gene3D" id="1.10.287.10">
    <property type="entry name" value="S15/NS1, RNA-binding"/>
    <property type="match status" value="1"/>
</dbReference>
<dbReference type="HAMAP" id="MF_01343_B">
    <property type="entry name" value="Ribosomal_uS15_B"/>
    <property type="match status" value="1"/>
</dbReference>
<dbReference type="InterPro" id="IPR000589">
    <property type="entry name" value="Ribosomal_uS15"/>
</dbReference>
<dbReference type="InterPro" id="IPR005290">
    <property type="entry name" value="Ribosomal_uS15_bac-type"/>
</dbReference>
<dbReference type="InterPro" id="IPR009068">
    <property type="entry name" value="uS15_NS1_RNA-bd_sf"/>
</dbReference>
<dbReference type="NCBIfam" id="TIGR00952">
    <property type="entry name" value="S15_bact"/>
    <property type="match status" value="1"/>
</dbReference>
<dbReference type="PANTHER" id="PTHR23321">
    <property type="entry name" value="RIBOSOMAL PROTEIN S15, BACTERIAL AND ORGANELLAR"/>
    <property type="match status" value="1"/>
</dbReference>
<dbReference type="PANTHER" id="PTHR23321:SF26">
    <property type="entry name" value="SMALL RIBOSOMAL SUBUNIT PROTEIN US15M"/>
    <property type="match status" value="1"/>
</dbReference>
<dbReference type="Pfam" id="PF00312">
    <property type="entry name" value="Ribosomal_S15"/>
    <property type="match status" value="1"/>
</dbReference>
<dbReference type="SMART" id="SM01387">
    <property type="entry name" value="Ribosomal_S15"/>
    <property type="match status" value="1"/>
</dbReference>
<dbReference type="SUPFAM" id="SSF47060">
    <property type="entry name" value="S15/NS1 RNA-binding domain"/>
    <property type="match status" value="1"/>
</dbReference>
<dbReference type="PROSITE" id="PS00362">
    <property type="entry name" value="RIBOSOMAL_S15"/>
    <property type="match status" value="1"/>
</dbReference>
<sequence>MYLDAAKKQEIFSKYGKSNTDTGSAEAQIALFSYRITHLTEHMKLNRKDYSTERALTMLVGKRRALLDYLKAKDITRYRDIIKELGLRK</sequence>
<name>RS15_BACFR</name>
<reference key="1">
    <citation type="journal article" date="2004" name="Proc. Natl. Acad. Sci. U.S.A.">
        <title>Genomic analysis of Bacteroides fragilis reveals extensive DNA inversions regulating cell surface adaptation.</title>
        <authorList>
            <person name="Kuwahara T."/>
            <person name="Yamashita A."/>
            <person name="Hirakawa H."/>
            <person name="Nakayama H."/>
            <person name="Toh H."/>
            <person name="Okada N."/>
            <person name="Kuhara S."/>
            <person name="Hattori M."/>
            <person name="Hayashi T."/>
            <person name="Ohnishi Y."/>
        </authorList>
    </citation>
    <scope>NUCLEOTIDE SEQUENCE [LARGE SCALE GENOMIC DNA]</scope>
    <source>
        <strain>YCH46</strain>
    </source>
</reference>
<feature type="chain" id="PRO_0000115383" description="Small ribosomal subunit protein uS15">
    <location>
        <begin position="1"/>
        <end position="89"/>
    </location>
</feature>
<protein>
    <recommendedName>
        <fullName evidence="1">Small ribosomal subunit protein uS15</fullName>
    </recommendedName>
    <alternativeName>
        <fullName evidence="2">30S ribosomal protein S15</fullName>
    </alternativeName>
</protein>
<gene>
    <name evidence="1" type="primary">rpsO</name>
    <name type="ordered locus">BF4464</name>
</gene>
<proteinExistence type="inferred from homology"/>
<evidence type="ECO:0000255" key="1">
    <source>
        <dbReference type="HAMAP-Rule" id="MF_01343"/>
    </source>
</evidence>
<evidence type="ECO:0000305" key="2"/>
<accession>Q64MT6</accession>
<comment type="function">
    <text evidence="1">One of the primary rRNA binding proteins, it binds directly to 16S rRNA where it helps nucleate assembly of the platform of the 30S subunit by binding and bridging several RNA helices of the 16S rRNA.</text>
</comment>
<comment type="function">
    <text evidence="1">Forms an intersubunit bridge (bridge B4) with the 23S rRNA of the 50S subunit in the ribosome.</text>
</comment>
<comment type="subunit">
    <text evidence="1">Part of the 30S ribosomal subunit. Forms a bridge to the 50S subunit in the 70S ribosome, contacting the 23S rRNA.</text>
</comment>
<comment type="similarity">
    <text evidence="1">Belongs to the universal ribosomal protein uS15 family.</text>
</comment>
<organism>
    <name type="scientific">Bacteroides fragilis (strain YCH46)</name>
    <dbReference type="NCBI Taxonomy" id="295405"/>
    <lineage>
        <taxon>Bacteria</taxon>
        <taxon>Pseudomonadati</taxon>
        <taxon>Bacteroidota</taxon>
        <taxon>Bacteroidia</taxon>
        <taxon>Bacteroidales</taxon>
        <taxon>Bacteroidaceae</taxon>
        <taxon>Bacteroides</taxon>
    </lineage>
</organism>